<evidence type="ECO:0000255" key="1">
    <source>
        <dbReference type="PROSITE-ProRule" id="PRU00173"/>
    </source>
</evidence>
<evidence type="ECO:0000269" key="2">
    <source>
    </source>
</evidence>
<evidence type="ECO:0000305" key="3"/>
<evidence type="ECO:0000312" key="4">
    <source>
        <dbReference type="FlyBase" id="FBgn0001228"/>
    </source>
</evidence>
<reference key="1">
    <citation type="journal article" date="1988" name="J. Mol. Biol.">
        <title>An unusual split Drosophila heat shock gene expressed during embryogenesis, pupation and in testis.</title>
        <authorList>
            <person name="Pauli D."/>
            <person name="Tonka C.H."/>
            <person name="Ayme-Southgate A."/>
        </authorList>
    </citation>
    <scope>NUCLEOTIDE SEQUENCE [GENOMIC DNA]</scope>
    <scope>DEVELOPMENTAL STAGE</scope>
</reference>
<reference key="2">
    <citation type="journal article" date="2000" name="Science">
        <title>The genome sequence of Drosophila melanogaster.</title>
        <authorList>
            <person name="Adams M.D."/>
            <person name="Celniker S.E."/>
            <person name="Holt R.A."/>
            <person name="Evans C.A."/>
            <person name="Gocayne J.D."/>
            <person name="Amanatides P.G."/>
            <person name="Scherer S.E."/>
            <person name="Li P.W."/>
            <person name="Hoskins R.A."/>
            <person name="Galle R.F."/>
            <person name="George R.A."/>
            <person name="Lewis S.E."/>
            <person name="Richards S."/>
            <person name="Ashburner M."/>
            <person name="Henderson S.N."/>
            <person name="Sutton G.G."/>
            <person name="Wortman J.R."/>
            <person name="Yandell M.D."/>
            <person name="Zhang Q."/>
            <person name="Chen L.X."/>
            <person name="Brandon R.C."/>
            <person name="Rogers Y.-H.C."/>
            <person name="Blazej R.G."/>
            <person name="Champe M."/>
            <person name="Pfeiffer B.D."/>
            <person name="Wan K.H."/>
            <person name="Doyle C."/>
            <person name="Baxter E.G."/>
            <person name="Helt G."/>
            <person name="Nelson C.R."/>
            <person name="Miklos G.L.G."/>
            <person name="Abril J.F."/>
            <person name="Agbayani A."/>
            <person name="An H.-J."/>
            <person name="Andrews-Pfannkoch C."/>
            <person name="Baldwin D."/>
            <person name="Ballew R.M."/>
            <person name="Basu A."/>
            <person name="Baxendale J."/>
            <person name="Bayraktaroglu L."/>
            <person name="Beasley E.M."/>
            <person name="Beeson K.Y."/>
            <person name="Benos P.V."/>
            <person name="Berman B.P."/>
            <person name="Bhandari D."/>
            <person name="Bolshakov S."/>
            <person name="Borkova D."/>
            <person name="Botchan M.R."/>
            <person name="Bouck J."/>
            <person name="Brokstein P."/>
            <person name="Brottier P."/>
            <person name="Burtis K.C."/>
            <person name="Busam D.A."/>
            <person name="Butler H."/>
            <person name="Cadieu E."/>
            <person name="Center A."/>
            <person name="Chandra I."/>
            <person name="Cherry J.M."/>
            <person name="Cawley S."/>
            <person name="Dahlke C."/>
            <person name="Davenport L.B."/>
            <person name="Davies P."/>
            <person name="de Pablos B."/>
            <person name="Delcher A."/>
            <person name="Deng Z."/>
            <person name="Mays A.D."/>
            <person name="Dew I."/>
            <person name="Dietz S.M."/>
            <person name="Dodson K."/>
            <person name="Doup L.E."/>
            <person name="Downes M."/>
            <person name="Dugan-Rocha S."/>
            <person name="Dunkov B.C."/>
            <person name="Dunn P."/>
            <person name="Durbin K.J."/>
            <person name="Evangelista C.C."/>
            <person name="Ferraz C."/>
            <person name="Ferriera S."/>
            <person name="Fleischmann W."/>
            <person name="Fosler C."/>
            <person name="Gabrielian A.E."/>
            <person name="Garg N.S."/>
            <person name="Gelbart W.M."/>
            <person name="Glasser K."/>
            <person name="Glodek A."/>
            <person name="Gong F."/>
            <person name="Gorrell J.H."/>
            <person name="Gu Z."/>
            <person name="Guan P."/>
            <person name="Harris M."/>
            <person name="Harris N.L."/>
            <person name="Harvey D.A."/>
            <person name="Heiman T.J."/>
            <person name="Hernandez J.R."/>
            <person name="Houck J."/>
            <person name="Hostin D."/>
            <person name="Houston K.A."/>
            <person name="Howland T.J."/>
            <person name="Wei M.-H."/>
            <person name="Ibegwam C."/>
            <person name="Jalali M."/>
            <person name="Kalush F."/>
            <person name="Karpen G.H."/>
            <person name="Ke Z."/>
            <person name="Kennison J.A."/>
            <person name="Ketchum K.A."/>
            <person name="Kimmel B.E."/>
            <person name="Kodira C.D."/>
            <person name="Kraft C.L."/>
            <person name="Kravitz S."/>
            <person name="Kulp D."/>
            <person name="Lai Z."/>
            <person name="Lasko P."/>
            <person name="Lei Y."/>
            <person name="Levitsky A.A."/>
            <person name="Li J.H."/>
            <person name="Li Z."/>
            <person name="Liang Y."/>
            <person name="Lin X."/>
            <person name="Liu X."/>
            <person name="Mattei B."/>
            <person name="McIntosh T.C."/>
            <person name="McLeod M.P."/>
            <person name="McPherson D."/>
            <person name="Merkulov G."/>
            <person name="Milshina N.V."/>
            <person name="Mobarry C."/>
            <person name="Morris J."/>
            <person name="Moshrefi A."/>
            <person name="Mount S.M."/>
            <person name="Moy M."/>
            <person name="Murphy B."/>
            <person name="Murphy L."/>
            <person name="Muzny D.M."/>
            <person name="Nelson D.L."/>
            <person name="Nelson D.R."/>
            <person name="Nelson K.A."/>
            <person name="Nixon K."/>
            <person name="Nusskern D.R."/>
            <person name="Pacleb J.M."/>
            <person name="Palazzolo M."/>
            <person name="Pittman G.S."/>
            <person name="Pan S."/>
            <person name="Pollard J."/>
            <person name="Puri V."/>
            <person name="Reese M.G."/>
            <person name="Reinert K."/>
            <person name="Remington K."/>
            <person name="Saunders R.D.C."/>
            <person name="Scheeler F."/>
            <person name="Shen H."/>
            <person name="Shue B.C."/>
            <person name="Siden-Kiamos I."/>
            <person name="Simpson M."/>
            <person name="Skupski M.P."/>
            <person name="Smith T.J."/>
            <person name="Spier E."/>
            <person name="Spradling A.C."/>
            <person name="Stapleton M."/>
            <person name="Strong R."/>
            <person name="Sun E."/>
            <person name="Svirskas R."/>
            <person name="Tector C."/>
            <person name="Turner R."/>
            <person name="Venter E."/>
            <person name="Wang A.H."/>
            <person name="Wang X."/>
            <person name="Wang Z.-Y."/>
            <person name="Wassarman D.A."/>
            <person name="Weinstock G.M."/>
            <person name="Weissenbach J."/>
            <person name="Williams S.M."/>
            <person name="Woodage T."/>
            <person name="Worley K.C."/>
            <person name="Wu D."/>
            <person name="Yang S."/>
            <person name="Yao Q.A."/>
            <person name="Ye J."/>
            <person name="Yeh R.-F."/>
            <person name="Zaveri J.S."/>
            <person name="Zhan M."/>
            <person name="Zhang G."/>
            <person name="Zhao Q."/>
            <person name="Zheng L."/>
            <person name="Zheng X.H."/>
            <person name="Zhong F.N."/>
            <person name="Zhong W."/>
            <person name="Zhou X."/>
            <person name="Zhu S.C."/>
            <person name="Zhu X."/>
            <person name="Smith H.O."/>
            <person name="Gibbs R.A."/>
            <person name="Myers E.W."/>
            <person name="Rubin G.M."/>
            <person name="Venter J.C."/>
        </authorList>
    </citation>
    <scope>NUCLEOTIDE SEQUENCE [LARGE SCALE GENOMIC DNA]</scope>
    <source>
        <strain>Berkeley</strain>
    </source>
</reference>
<reference key="3">
    <citation type="journal article" date="2002" name="Genome Biol.">
        <title>Annotation of the Drosophila melanogaster euchromatic genome: a systematic review.</title>
        <authorList>
            <person name="Misra S."/>
            <person name="Crosby M.A."/>
            <person name="Mungall C.J."/>
            <person name="Matthews B.B."/>
            <person name="Campbell K.S."/>
            <person name="Hradecky P."/>
            <person name="Huang Y."/>
            <person name="Kaminker J.S."/>
            <person name="Millburn G.H."/>
            <person name="Prochnik S.E."/>
            <person name="Smith C.D."/>
            <person name="Tupy J.L."/>
            <person name="Whitfield E.J."/>
            <person name="Bayraktaroglu L."/>
            <person name="Berman B.P."/>
            <person name="Bettencourt B.R."/>
            <person name="Celniker S.E."/>
            <person name="de Grey A.D.N.J."/>
            <person name="Drysdale R.A."/>
            <person name="Harris N.L."/>
            <person name="Richter J."/>
            <person name="Russo S."/>
            <person name="Schroeder A.J."/>
            <person name="Shu S.Q."/>
            <person name="Stapleton M."/>
            <person name="Yamada C."/>
            <person name="Ashburner M."/>
            <person name="Gelbart W.M."/>
            <person name="Rubin G.M."/>
            <person name="Lewis S.E."/>
        </authorList>
    </citation>
    <scope>GENOME REANNOTATION</scope>
    <source>
        <strain>Berkeley</strain>
    </source>
</reference>
<reference key="4">
    <citation type="submission" date="2011-02" db="EMBL/GenBank/DDBJ databases">
        <authorList>
            <person name="Carlson J."/>
            <person name="Booth B."/>
            <person name="Frise E."/>
            <person name="Park S."/>
            <person name="Wan K."/>
            <person name="Yu C."/>
            <person name="Celniker S."/>
        </authorList>
    </citation>
    <scope>NUCLEOTIDE SEQUENCE [LARGE SCALE MRNA]</scope>
    <source>
        <strain>Berkeley</strain>
        <tissue>Embryo</tissue>
    </source>
</reference>
<comment type="developmental stage">
    <text evidence="2">Expressed during embryogenesis and pupation.</text>
</comment>
<protein>
    <recommendedName>
        <fullName evidence="3">Rhodanese domain-containing protein CG4456</fullName>
    </recommendedName>
    <alternativeName>
        <fullName evidence="4">Heat shock protein 67B2</fullName>
    </alternativeName>
</protein>
<name>CG445_DROME</name>
<accession>P22978</accession>
<accession>F0J880</accession>
<accession>Q0E8G7</accession>
<accession>Q9VSX0</accession>
<sequence>MATYEQVKDVPNHPDVYLIDVRRKEELQQTGFIPASINIPLDELDKALNLDGSAFKNKYGRSKPEKQSPIIFTCRSGNRVLEAEKIAKSQGYSNVVIYKGSWNEWAQKEGL</sequence>
<proteinExistence type="evidence at transcript level"/>
<feature type="chain" id="PRO_0000084076" description="Rhodanese domain-containing protein CG4456">
    <location>
        <begin position="1"/>
        <end position="111"/>
    </location>
</feature>
<feature type="domain" description="Rhodanese" evidence="1">
    <location>
        <begin position="12"/>
        <end position="110"/>
    </location>
</feature>
<gene>
    <name evidence="4" type="ORF">CG4456</name>
</gene>
<organism>
    <name type="scientific">Drosophila melanogaster</name>
    <name type="common">Fruit fly</name>
    <dbReference type="NCBI Taxonomy" id="7227"/>
    <lineage>
        <taxon>Eukaryota</taxon>
        <taxon>Metazoa</taxon>
        <taxon>Ecdysozoa</taxon>
        <taxon>Arthropoda</taxon>
        <taxon>Hexapoda</taxon>
        <taxon>Insecta</taxon>
        <taxon>Pterygota</taxon>
        <taxon>Neoptera</taxon>
        <taxon>Endopterygota</taxon>
        <taxon>Diptera</taxon>
        <taxon>Brachycera</taxon>
        <taxon>Muscomorpha</taxon>
        <taxon>Ephydroidea</taxon>
        <taxon>Drosophilidae</taxon>
        <taxon>Drosophila</taxon>
        <taxon>Sophophora</taxon>
    </lineage>
</organism>
<dbReference type="EMBL" id="X07311">
    <property type="protein sequence ID" value="CAA30276.1"/>
    <property type="molecule type" value="Genomic_DNA"/>
</dbReference>
<dbReference type="EMBL" id="AE014296">
    <property type="protein sequence ID" value="AAN11961.1"/>
    <property type="molecule type" value="Genomic_DNA"/>
</dbReference>
<dbReference type="EMBL" id="AY060412">
    <property type="protein sequence ID" value="ADY17793.1"/>
    <property type="molecule type" value="mRNA"/>
</dbReference>
<dbReference type="PIR" id="S00688">
    <property type="entry name" value="S00688"/>
</dbReference>
<dbReference type="RefSeq" id="NP_001027116.1">
    <property type="nucleotide sequence ID" value="NM_001031945.2"/>
</dbReference>
<dbReference type="RefSeq" id="NP_001027117.1">
    <property type="nucleotide sequence ID" value="NM_001031946.2"/>
</dbReference>
<dbReference type="RefSeq" id="NP_001189076.1">
    <property type="nucleotide sequence ID" value="NM_001202147.1"/>
</dbReference>
<dbReference type="RefSeq" id="NP_001189077.1">
    <property type="nucleotide sequence ID" value="NM_001202148.2"/>
</dbReference>
<dbReference type="SMR" id="P22978"/>
<dbReference type="FunCoup" id="P22978">
    <property type="interactions" value="26"/>
</dbReference>
<dbReference type="IntAct" id="P22978">
    <property type="interactions" value="1"/>
</dbReference>
<dbReference type="STRING" id="7227.FBpp0100115"/>
<dbReference type="PaxDb" id="7227-FBpp0292525"/>
<dbReference type="DNASU" id="3771872"/>
<dbReference type="EnsemblMetazoa" id="FBtr0100653">
    <property type="protein sequence ID" value="FBpp0100114"/>
    <property type="gene ID" value="FBgn0001228"/>
</dbReference>
<dbReference type="EnsemblMetazoa" id="FBtr0100655">
    <property type="protein sequence ID" value="FBpp0100115"/>
    <property type="gene ID" value="FBgn0001228"/>
</dbReference>
<dbReference type="EnsemblMetazoa" id="FBtr0303473">
    <property type="protein sequence ID" value="FBpp0292525"/>
    <property type="gene ID" value="FBgn0001228"/>
</dbReference>
<dbReference type="EnsemblMetazoa" id="FBtr0303474">
    <property type="protein sequence ID" value="FBpp0292526"/>
    <property type="gene ID" value="FBgn0001228"/>
</dbReference>
<dbReference type="GeneID" id="3771872"/>
<dbReference type="KEGG" id="dme:Dmel_CG4456"/>
<dbReference type="AGR" id="FB:FBgn0001228"/>
<dbReference type="FlyBase" id="FBgn0001228">
    <property type="gene designation" value="CG4456"/>
</dbReference>
<dbReference type="VEuPathDB" id="VectorBase:FBgn0001228"/>
<dbReference type="eggNOG" id="KOG1530">
    <property type="taxonomic scope" value="Eukaryota"/>
</dbReference>
<dbReference type="GeneTree" id="ENSGT00940000163155"/>
<dbReference type="HOGENOM" id="CLU_089574_0_2_1"/>
<dbReference type="InParanoid" id="P22978"/>
<dbReference type="OMA" id="FFCQMGR"/>
<dbReference type="OrthoDB" id="566238at2759"/>
<dbReference type="PhylomeDB" id="P22978"/>
<dbReference type="BioGRID-ORCS" id="3771872">
    <property type="hits" value="0 hits in 1 CRISPR screen"/>
</dbReference>
<dbReference type="GenomeRNAi" id="3771872"/>
<dbReference type="PRO" id="PR:P22978"/>
<dbReference type="Proteomes" id="UP000000803">
    <property type="component" value="Chromosome 3L"/>
</dbReference>
<dbReference type="Bgee" id="FBgn0001228">
    <property type="expression patterns" value="Expressed in seminal fluid secreting gland and 40 other cell types or tissues"/>
</dbReference>
<dbReference type="ExpressionAtlas" id="P22978">
    <property type="expression patterns" value="baseline"/>
</dbReference>
<dbReference type="CDD" id="cd01519">
    <property type="entry name" value="RHOD_HSP67B2"/>
    <property type="match status" value="1"/>
</dbReference>
<dbReference type="Gene3D" id="3.40.250.10">
    <property type="entry name" value="Rhodanese-like domain"/>
    <property type="match status" value="1"/>
</dbReference>
<dbReference type="InterPro" id="IPR001763">
    <property type="entry name" value="Rhodanese-like_dom"/>
</dbReference>
<dbReference type="InterPro" id="IPR036873">
    <property type="entry name" value="Rhodanese-like_dom_sf"/>
</dbReference>
<dbReference type="PANTHER" id="PTHR44086">
    <property type="entry name" value="THIOSULFATE SULFURTRANSFERASE RDL2, MITOCHONDRIAL-RELATED"/>
    <property type="match status" value="1"/>
</dbReference>
<dbReference type="PANTHER" id="PTHR44086:SF10">
    <property type="entry name" value="THIOSULFATE SULFURTRANSFERASE_RHODANESE-LIKE DOMAIN-CONTAINING PROTEIN 3"/>
    <property type="match status" value="1"/>
</dbReference>
<dbReference type="Pfam" id="PF00581">
    <property type="entry name" value="Rhodanese"/>
    <property type="match status" value="1"/>
</dbReference>
<dbReference type="SMART" id="SM00450">
    <property type="entry name" value="RHOD"/>
    <property type="match status" value="1"/>
</dbReference>
<dbReference type="SUPFAM" id="SSF52821">
    <property type="entry name" value="Rhodanese/Cell cycle control phosphatase"/>
    <property type="match status" value="1"/>
</dbReference>
<dbReference type="PROSITE" id="PS50206">
    <property type="entry name" value="RHODANESE_3"/>
    <property type="match status" value="1"/>
</dbReference>
<keyword id="KW-1185">Reference proteome</keyword>
<keyword id="KW-0346">Stress response</keyword>